<reference key="1">
    <citation type="journal article" date="2005" name="Science">
        <title>The transcriptional landscape of the mammalian genome.</title>
        <authorList>
            <person name="Carninci P."/>
            <person name="Kasukawa T."/>
            <person name="Katayama S."/>
            <person name="Gough J."/>
            <person name="Frith M.C."/>
            <person name="Maeda N."/>
            <person name="Oyama R."/>
            <person name="Ravasi T."/>
            <person name="Lenhard B."/>
            <person name="Wells C."/>
            <person name="Kodzius R."/>
            <person name="Shimokawa K."/>
            <person name="Bajic V.B."/>
            <person name="Brenner S.E."/>
            <person name="Batalov S."/>
            <person name="Forrest A.R."/>
            <person name="Zavolan M."/>
            <person name="Davis M.J."/>
            <person name="Wilming L.G."/>
            <person name="Aidinis V."/>
            <person name="Allen J.E."/>
            <person name="Ambesi-Impiombato A."/>
            <person name="Apweiler R."/>
            <person name="Aturaliya R.N."/>
            <person name="Bailey T.L."/>
            <person name="Bansal M."/>
            <person name="Baxter L."/>
            <person name="Beisel K.W."/>
            <person name="Bersano T."/>
            <person name="Bono H."/>
            <person name="Chalk A.M."/>
            <person name="Chiu K.P."/>
            <person name="Choudhary V."/>
            <person name="Christoffels A."/>
            <person name="Clutterbuck D.R."/>
            <person name="Crowe M.L."/>
            <person name="Dalla E."/>
            <person name="Dalrymple B.P."/>
            <person name="de Bono B."/>
            <person name="Della Gatta G."/>
            <person name="di Bernardo D."/>
            <person name="Down T."/>
            <person name="Engstrom P."/>
            <person name="Fagiolini M."/>
            <person name="Faulkner G."/>
            <person name="Fletcher C.F."/>
            <person name="Fukushima T."/>
            <person name="Furuno M."/>
            <person name="Futaki S."/>
            <person name="Gariboldi M."/>
            <person name="Georgii-Hemming P."/>
            <person name="Gingeras T.R."/>
            <person name="Gojobori T."/>
            <person name="Green R.E."/>
            <person name="Gustincich S."/>
            <person name="Harbers M."/>
            <person name="Hayashi Y."/>
            <person name="Hensch T.K."/>
            <person name="Hirokawa N."/>
            <person name="Hill D."/>
            <person name="Huminiecki L."/>
            <person name="Iacono M."/>
            <person name="Ikeo K."/>
            <person name="Iwama A."/>
            <person name="Ishikawa T."/>
            <person name="Jakt M."/>
            <person name="Kanapin A."/>
            <person name="Katoh M."/>
            <person name="Kawasawa Y."/>
            <person name="Kelso J."/>
            <person name="Kitamura H."/>
            <person name="Kitano H."/>
            <person name="Kollias G."/>
            <person name="Krishnan S.P."/>
            <person name="Kruger A."/>
            <person name="Kummerfeld S.K."/>
            <person name="Kurochkin I.V."/>
            <person name="Lareau L.F."/>
            <person name="Lazarevic D."/>
            <person name="Lipovich L."/>
            <person name="Liu J."/>
            <person name="Liuni S."/>
            <person name="McWilliam S."/>
            <person name="Madan Babu M."/>
            <person name="Madera M."/>
            <person name="Marchionni L."/>
            <person name="Matsuda H."/>
            <person name="Matsuzawa S."/>
            <person name="Miki H."/>
            <person name="Mignone F."/>
            <person name="Miyake S."/>
            <person name="Morris K."/>
            <person name="Mottagui-Tabar S."/>
            <person name="Mulder N."/>
            <person name="Nakano N."/>
            <person name="Nakauchi H."/>
            <person name="Ng P."/>
            <person name="Nilsson R."/>
            <person name="Nishiguchi S."/>
            <person name="Nishikawa S."/>
            <person name="Nori F."/>
            <person name="Ohara O."/>
            <person name="Okazaki Y."/>
            <person name="Orlando V."/>
            <person name="Pang K.C."/>
            <person name="Pavan W.J."/>
            <person name="Pavesi G."/>
            <person name="Pesole G."/>
            <person name="Petrovsky N."/>
            <person name="Piazza S."/>
            <person name="Reed J."/>
            <person name="Reid J.F."/>
            <person name="Ring B.Z."/>
            <person name="Ringwald M."/>
            <person name="Rost B."/>
            <person name="Ruan Y."/>
            <person name="Salzberg S.L."/>
            <person name="Sandelin A."/>
            <person name="Schneider C."/>
            <person name="Schoenbach C."/>
            <person name="Sekiguchi K."/>
            <person name="Semple C.A."/>
            <person name="Seno S."/>
            <person name="Sessa L."/>
            <person name="Sheng Y."/>
            <person name="Shibata Y."/>
            <person name="Shimada H."/>
            <person name="Shimada K."/>
            <person name="Silva D."/>
            <person name="Sinclair B."/>
            <person name="Sperling S."/>
            <person name="Stupka E."/>
            <person name="Sugiura K."/>
            <person name="Sultana R."/>
            <person name="Takenaka Y."/>
            <person name="Taki K."/>
            <person name="Tammoja K."/>
            <person name="Tan S.L."/>
            <person name="Tang S."/>
            <person name="Taylor M.S."/>
            <person name="Tegner J."/>
            <person name="Teichmann S.A."/>
            <person name="Ueda H.R."/>
            <person name="van Nimwegen E."/>
            <person name="Verardo R."/>
            <person name="Wei C.L."/>
            <person name="Yagi K."/>
            <person name="Yamanishi H."/>
            <person name="Zabarovsky E."/>
            <person name="Zhu S."/>
            <person name="Zimmer A."/>
            <person name="Hide W."/>
            <person name="Bult C."/>
            <person name="Grimmond S.M."/>
            <person name="Teasdale R.D."/>
            <person name="Liu E.T."/>
            <person name="Brusic V."/>
            <person name="Quackenbush J."/>
            <person name="Wahlestedt C."/>
            <person name="Mattick J.S."/>
            <person name="Hume D.A."/>
            <person name="Kai C."/>
            <person name="Sasaki D."/>
            <person name="Tomaru Y."/>
            <person name="Fukuda S."/>
            <person name="Kanamori-Katayama M."/>
            <person name="Suzuki M."/>
            <person name="Aoki J."/>
            <person name="Arakawa T."/>
            <person name="Iida J."/>
            <person name="Imamura K."/>
            <person name="Itoh M."/>
            <person name="Kato T."/>
            <person name="Kawaji H."/>
            <person name="Kawagashira N."/>
            <person name="Kawashima T."/>
            <person name="Kojima M."/>
            <person name="Kondo S."/>
            <person name="Konno H."/>
            <person name="Nakano K."/>
            <person name="Ninomiya N."/>
            <person name="Nishio T."/>
            <person name="Okada M."/>
            <person name="Plessy C."/>
            <person name="Shibata K."/>
            <person name="Shiraki T."/>
            <person name="Suzuki S."/>
            <person name="Tagami M."/>
            <person name="Waki K."/>
            <person name="Watahiki A."/>
            <person name="Okamura-Oho Y."/>
            <person name="Suzuki H."/>
            <person name="Kawai J."/>
            <person name="Hayashizaki Y."/>
        </authorList>
    </citation>
    <scope>NUCLEOTIDE SEQUENCE [LARGE SCALE MRNA] (ISOFORMS 1 AND 3)</scope>
    <source>
        <strain>C57BL/6J</strain>
        <strain>NOD</strain>
        <tissue>Corpora quadrigemina</tissue>
        <tissue>Spinal cord</tissue>
        <tissue>Testis</tissue>
    </source>
</reference>
<reference key="2">
    <citation type="journal article" date="2004" name="Genome Res.">
        <title>The status, quality, and expansion of the NIH full-length cDNA project: the Mammalian Gene Collection (MGC).</title>
        <authorList>
            <consortium name="The MGC Project Team"/>
        </authorList>
    </citation>
    <scope>NUCLEOTIDE SEQUENCE [LARGE SCALE MRNA] (ISOFORM 2)</scope>
    <source>
        <strain>C57BL/6J</strain>
        <tissue>Brain</tissue>
    </source>
</reference>
<reference key="3">
    <citation type="journal article" date="1996" name="J. Biol. Chem.">
        <title>Isolation of a NCK-associated kinase, PRK2, an SH3-binding protein and potential effector of Rho protein signaling.</title>
        <authorList>
            <person name="Quilliam L.A."/>
            <person name="Lambert Q.T."/>
            <person name="Mickelson-Young L.A."/>
            <person name="Westwick J.K."/>
            <person name="Sparks A.B."/>
            <person name="Kay B.K."/>
            <person name="Jenkins N.A."/>
            <person name="Gilbert D.J."/>
            <person name="Copeland N.G."/>
            <person name="Der C.J."/>
        </authorList>
    </citation>
    <scope>FUNCTION</scope>
    <scope>INTERACTION WITH NCK1</scope>
    <scope>TISSUE SPECIFICITY</scope>
</reference>
<reference key="4">
    <citation type="journal article" date="1997" name="Mol. Cell. Biol.">
        <title>The PRK2 kinase is a potential effector target of both Rho and Rac GTPases and regulates actin cytoskeletal organization.</title>
        <authorList>
            <person name="Vincent S."/>
            <person name="Settleman J."/>
        </authorList>
    </citation>
    <scope>SUBCELLULAR LOCATION</scope>
    <scope>TISSUE SPECIFICITY</scope>
</reference>
<reference key="5">
    <citation type="journal article" date="2000" name="J. Biol. Chem.">
        <title>MEK kinase 2 binds and activates protein kinase C-related kinase 2. Bifurcation of kinase regulatory pathways at the level of an MAPK kinase kinase.</title>
        <authorList>
            <person name="Sun W."/>
            <person name="Vincent S."/>
            <person name="Settleman J."/>
            <person name="Johnson G.L."/>
        </authorList>
    </citation>
    <scope>INTERACTION WITH MAP3K2</scope>
</reference>
<reference key="6">
    <citation type="journal article" date="2002" name="J. Cell Biol.">
        <title>Fyn tyrosine kinase is a downstream mediator of Rho/PRK2 function in keratinocyte cell-cell adhesion.</title>
        <authorList>
            <person name="Calautti E."/>
            <person name="Grossi M."/>
            <person name="Mammucari C."/>
            <person name="Aoyama Y."/>
            <person name="Pirro M."/>
            <person name="Ono Y."/>
            <person name="Li J."/>
            <person name="Dotto G.P."/>
        </authorList>
    </citation>
    <scope>TISSUE SPECIFICITY</scope>
</reference>
<reference key="7">
    <citation type="journal article" date="2007" name="J. Neurochem.">
        <title>Hyaluronan-CD44 interaction stimulates Rac1 signaling and PKN gamma kinase activation leading to cytoskeleton function and cell migration in astrocytes.</title>
        <authorList>
            <person name="Bourguignon L.Y."/>
            <person name="Gilad E."/>
            <person name="Peyrollier K."/>
            <person name="Brightman A."/>
            <person name="Swanson R.A."/>
        </authorList>
    </citation>
    <scope>FUNCTION IN CELL MIGRATION</scope>
    <scope>FUNCTION IN PHOSPHORYLATION OF CTTN</scope>
    <scope>ACTIVITY REGULATION</scope>
    <scope>INTERACTION WITH CD44 AND RAC1</scope>
    <scope>TISSUE SPECIFICITY</scope>
</reference>
<reference key="8">
    <citation type="journal article" date="2007" name="Proc. Natl. Acad. Sci. U.S.A.">
        <title>Large-scale phosphorylation analysis of mouse liver.</title>
        <authorList>
            <person name="Villen J."/>
            <person name="Beausoleil S.A."/>
            <person name="Gerber S.A."/>
            <person name="Gygi S.P."/>
        </authorList>
    </citation>
    <scope>IDENTIFICATION BY MASS SPECTROMETRY [LARGE SCALE ANALYSIS]</scope>
    <source>
        <tissue>Liver</tissue>
    </source>
</reference>
<reference key="9">
    <citation type="journal article" date="2009" name="Immunity">
        <title>The phagosomal proteome in interferon-gamma-activated macrophages.</title>
        <authorList>
            <person name="Trost M."/>
            <person name="English L."/>
            <person name="Lemieux S."/>
            <person name="Courcelles M."/>
            <person name="Desjardins M."/>
            <person name="Thibault P."/>
        </authorList>
    </citation>
    <scope>IDENTIFICATION BY MASS SPECTROMETRY [LARGE SCALE ANALYSIS]</scope>
</reference>
<reference key="10">
    <citation type="journal article" date="2010" name="Cell">
        <title>A tissue-specific atlas of mouse protein phosphorylation and expression.</title>
        <authorList>
            <person name="Huttlin E.L."/>
            <person name="Jedrychowski M.P."/>
            <person name="Elias J.E."/>
            <person name="Goswami T."/>
            <person name="Rad R."/>
            <person name="Beausoleil S.A."/>
            <person name="Villen J."/>
            <person name="Haas W."/>
            <person name="Sowa M.E."/>
            <person name="Gygi S.P."/>
        </authorList>
    </citation>
    <scope>PHOSPHORYLATION [LARGE SCALE ANALYSIS] AT SER-619 AND THR-957</scope>
    <scope>IDENTIFICATION BY MASS SPECTROMETRY [LARGE SCALE ANALYSIS]</scope>
    <source>
        <tissue>Brown adipose tissue</tissue>
        <tissue>Heart</tissue>
        <tissue>Kidney</tissue>
        <tissue>Liver</tissue>
        <tissue>Lung</tissue>
        <tissue>Pancreas</tissue>
        <tissue>Spleen</tissue>
        <tissue>Testis</tissue>
    </source>
</reference>
<reference key="11">
    <citation type="journal article" date="2011" name="Mol. Cell. Biol.">
        <title>The Rho target PRK2 regulates apical junction formation in human bronchial epithelial cells.</title>
        <authorList>
            <person name="Wallace S.W."/>
            <person name="Magalhaes A."/>
            <person name="Hall A."/>
        </authorList>
    </citation>
    <scope>FUNCTION</scope>
    <scope>INTERACTION WITH RAC1 AND RHOA</scope>
    <scope>MUTAGENESIS OF ALA-66; ALA-155; LYS-685 AND ASP-781</scope>
</reference>
<reference key="12">
    <citation type="journal article" date="2013" name="Mol. Cell">
        <title>SIRT5-mediated lysine desuccinylation impacts diverse metabolic pathways.</title>
        <authorList>
            <person name="Park J."/>
            <person name="Chen Y."/>
            <person name="Tishkoff D.X."/>
            <person name="Peng C."/>
            <person name="Tan M."/>
            <person name="Dai L."/>
            <person name="Xie Z."/>
            <person name="Zhang Y."/>
            <person name="Zwaans B.M."/>
            <person name="Skinner M.E."/>
            <person name="Lombard D.B."/>
            <person name="Zhao Y."/>
        </authorList>
    </citation>
    <scope>ACETYLATION [LARGE SCALE ANALYSIS] AT LYS-77</scope>
    <scope>IDENTIFICATION BY MASS SPECTROMETRY [LARGE SCALE ANALYSIS]</scope>
    <source>
        <tissue>Embryonic fibroblast</tissue>
    </source>
</reference>
<protein>
    <recommendedName>
        <fullName>Serine/threonine-protein kinase N2</fullName>
        <ecNumber>2.7.11.13</ecNumber>
    </recommendedName>
    <alternativeName>
        <fullName>PKN gamma</fullName>
    </alternativeName>
    <alternativeName>
        <fullName>Protein kinase C-like 2</fullName>
    </alternativeName>
    <alternativeName>
        <fullName>Protein-kinase C-related kinase 2</fullName>
    </alternativeName>
</protein>
<accession>Q8BWW9</accession>
<accession>Q3TBR3</accession>
<accession>Q80WS2</accession>
<accession>Q8BJL7</accession>
<accession>Q8BL62</accession>
<dbReference type="EC" id="2.7.11.13"/>
<dbReference type="EMBL" id="AK046248">
    <property type="protein sequence ID" value="BAC32655.1"/>
    <property type="molecule type" value="mRNA"/>
</dbReference>
<dbReference type="EMBL" id="AK133298">
    <property type="protein sequence ID" value="BAE21599.1"/>
    <property type="molecule type" value="mRNA"/>
</dbReference>
<dbReference type="EMBL" id="AK171092">
    <property type="protein sequence ID" value="BAE42244.1"/>
    <property type="molecule type" value="mRNA"/>
</dbReference>
<dbReference type="EMBL" id="AK049713">
    <property type="protein sequence ID" value="BAC33888.1"/>
    <property type="molecule type" value="mRNA"/>
</dbReference>
<dbReference type="EMBL" id="AK083425">
    <property type="protein sequence ID" value="BAC38910.1"/>
    <property type="molecule type" value="mRNA"/>
</dbReference>
<dbReference type="EMBL" id="BC052073">
    <property type="protein sequence ID" value="AAH52073.1"/>
    <property type="molecule type" value="mRNA"/>
</dbReference>
<dbReference type="CCDS" id="CCDS51084.1">
    <molecule id="Q8BWW9-1"/>
</dbReference>
<dbReference type="RefSeq" id="NP_848769.2">
    <molecule id="Q8BWW9-1"/>
    <property type="nucleotide sequence ID" value="NM_178654.4"/>
</dbReference>
<dbReference type="SMR" id="Q8BWW9"/>
<dbReference type="BioGRID" id="224651">
    <property type="interactions" value="6"/>
</dbReference>
<dbReference type="FunCoup" id="Q8BWW9">
    <property type="interactions" value="3180"/>
</dbReference>
<dbReference type="IntAct" id="Q8BWW9">
    <property type="interactions" value="1"/>
</dbReference>
<dbReference type="STRING" id="10090.ENSMUSP00000039566"/>
<dbReference type="GlyGen" id="Q8BWW9">
    <property type="glycosylation" value="1 site, 1 N-linked glycan (1 site)"/>
</dbReference>
<dbReference type="iPTMnet" id="Q8BWW9"/>
<dbReference type="PhosphoSitePlus" id="Q8BWW9"/>
<dbReference type="jPOST" id="Q8BWW9"/>
<dbReference type="PaxDb" id="10090-ENSMUSP00000039566"/>
<dbReference type="PeptideAtlas" id="Q8BWW9"/>
<dbReference type="ProteomicsDB" id="289664">
    <molecule id="Q8BWW9-1"/>
</dbReference>
<dbReference type="ProteomicsDB" id="289665">
    <molecule id="Q8BWW9-2"/>
</dbReference>
<dbReference type="ProteomicsDB" id="289666">
    <molecule id="Q8BWW9-3"/>
</dbReference>
<dbReference type="Pumba" id="Q8BWW9"/>
<dbReference type="Antibodypedia" id="33594">
    <property type="antibodies" value="258 antibodies from 34 providers"/>
</dbReference>
<dbReference type="DNASU" id="109333"/>
<dbReference type="Ensembl" id="ENSMUST00000043812.15">
    <molecule id="Q8BWW9-1"/>
    <property type="protein sequence ID" value="ENSMUSP00000039566.9"/>
    <property type="gene ID" value="ENSMUSG00000004591.17"/>
</dbReference>
<dbReference type="GeneID" id="109333"/>
<dbReference type="KEGG" id="mmu:109333"/>
<dbReference type="UCSC" id="uc008rpe.2">
    <molecule id="Q8BWW9-1"/>
    <property type="organism name" value="mouse"/>
</dbReference>
<dbReference type="AGR" id="MGI:109211"/>
<dbReference type="CTD" id="5586"/>
<dbReference type="MGI" id="MGI:109211">
    <property type="gene designation" value="Pkn2"/>
</dbReference>
<dbReference type="VEuPathDB" id="HostDB:ENSMUSG00000004591"/>
<dbReference type="eggNOG" id="KOG0694">
    <property type="taxonomic scope" value="Eukaryota"/>
</dbReference>
<dbReference type="GeneTree" id="ENSGT00940000154339"/>
<dbReference type="InParanoid" id="Q8BWW9"/>
<dbReference type="OMA" id="PEDVTXD"/>
<dbReference type="OrthoDB" id="63267at2759"/>
<dbReference type="PhylomeDB" id="Q8BWW9"/>
<dbReference type="TreeFam" id="TF102005"/>
<dbReference type="Reactome" id="R-MMU-5625740">
    <property type="pathway name" value="RHO GTPases activate PKNs"/>
</dbReference>
<dbReference type="Reactome" id="R-MMU-8980692">
    <property type="pathway name" value="RHOA GTPase cycle"/>
</dbReference>
<dbReference type="Reactome" id="R-MMU-9013026">
    <property type="pathway name" value="RHOB GTPase cycle"/>
</dbReference>
<dbReference type="Reactome" id="R-MMU-9013106">
    <property type="pathway name" value="RHOC GTPase cycle"/>
</dbReference>
<dbReference type="Reactome" id="R-MMU-9013149">
    <property type="pathway name" value="RAC1 GTPase cycle"/>
</dbReference>
<dbReference type="Reactome" id="R-MMU-9856530">
    <property type="pathway name" value="High laminar flow shear stress activates signaling by PIEZO1 and PECAM1:CDH5:KDR in endothelial cells"/>
</dbReference>
<dbReference type="BioGRID-ORCS" id="109333">
    <property type="hits" value="14 hits in 80 CRISPR screens"/>
</dbReference>
<dbReference type="ChiTaRS" id="Pkn2">
    <property type="organism name" value="mouse"/>
</dbReference>
<dbReference type="PRO" id="PR:Q8BWW9"/>
<dbReference type="Proteomes" id="UP000000589">
    <property type="component" value="Chromosome 3"/>
</dbReference>
<dbReference type="RNAct" id="Q8BWW9">
    <property type="molecule type" value="protein"/>
</dbReference>
<dbReference type="Bgee" id="ENSMUSG00000004591">
    <property type="expression patterns" value="Expressed in superior cervical ganglion and 240 other cell types or tissues"/>
</dbReference>
<dbReference type="ExpressionAtlas" id="Q8BWW9">
    <property type="expression patterns" value="baseline and differential"/>
</dbReference>
<dbReference type="GO" id="GO:0043296">
    <property type="term" value="C:apical junction complex"/>
    <property type="evidence" value="ECO:0000314"/>
    <property type="project" value="UniProtKB"/>
</dbReference>
<dbReference type="GO" id="GO:0005813">
    <property type="term" value="C:centrosome"/>
    <property type="evidence" value="ECO:0007669"/>
    <property type="project" value="Ensembl"/>
</dbReference>
<dbReference type="GO" id="GO:0032154">
    <property type="term" value="C:cleavage furrow"/>
    <property type="evidence" value="ECO:0000250"/>
    <property type="project" value="UniProtKB"/>
</dbReference>
<dbReference type="GO" id="GO:0005737">
    <property type="term" value="C:cytoplasm"/>
    <property type="evidence" value="ECO:0000314"/>
    <property type="project" value="MGI"/>
</dbReference>
<dbReference type="GO" id="GO:0005829">
    <property type="term" value="C:cytosol"/>
    <property type="evidence" value="ECO:0007669"/>
    <property type="project" value="Ensembl"/>
</dbReference>
<dbReference type="GO" id="GO:0045111">
    <property type="term" value="C:intermediate filament cytoskeleton"/>
    <property type="evidence" value="ECO:0007669"/>
    <property type="project" value="Ensembl"/>
</dbReference>
<dbReference type="GO" id="GO:0030027">
    <property type="term" value="C:lamellipodium"/>
    <property type="evidence" value="ECO:0000250"/>
    <property type="project" value="UniProtKB"/>
</dbReference>
<dbReference type="GO" id="GO:0030496">
    <property type="term" value="C:midbody"/>
    <property type="evidence" value="ECO:0000250"/>
    <property type="project" value="UniProtKB"/>
</dbReference>
<dbReference type="GO" id="GO:0016604">
    <property type="term" value="C:nuclear body"/>
    <property type="evidence" value="ECO:0007669"/>
    <property type="project" value="Ensembl"/>
</dbReference>
<dbReference type="GO" id="GO:0005634">
    <property type="term" value="C:nucleus"/>
    <property type="evidence" value="ECO:0000314"/>
    <property type="project" value="MGI"/>
</dbReference>
<dbReference type="GO" id="GO:0048471">
    <property type="term" value="C:perinuclear region of cytoplasm"/>
    <property type="evidence" value="ECO:0007669"/>
    <property type="project" value="Ensembl"/>
</dbReference>
<dbReference type="GO" id="GO:0032991">
    <property type="term" value="C:protein-containing complex"/>
    <property type="evidence" value="ECO:0000266"/>
    <property type="project" value="MGI"/>
</dbReference>
<dbReference type="GO" id="GO:0005524">
    <property type="term" value="F:ATP binding"/>
    <property type="evidence" value="ECO:0007669"/>
    <property type="project" value="UniProtKB-KW"/>
</dbReference>
<dbReference type="GO" id="GO:0004697">
    <property type="term" value="F:diacylglycerol-dependent serine/threonine kinase activity"/>
    <property type="evidence" value="ECO:0007669"/>
    <property type="project" value="UniProtKB-EC"/>
</dbReference>
<dbReference type="GO" id="GO:0042826">
    <property type="term" value="F:histone deacetylase binding"/>
    <property type="evidence" value="ECO:0000250"/>
    <property type="project" value="UniProtKB"/>
</dbReference>
<dbReference type="GO" id="GO:0106310">
    <property type="term" value="F:protein serine kinase activity"/>
    <property type="evidence" value="ECO:0007669"/>
    <property type="project" value="RHEA"/>
</dbReference>
<dbReference type="GO" id="GO:0004674">
    <property type="term" value="F:protein serine/threonine kinase activity"/>
    <property type="evidence" value="ECO:0000250"/>
    <property type="project" value="UniProtKB"/>
</dbReference>
<dbReference type="GO" id="GO:0070063">
    <property type="term" value="F:RNA polymerase binding"/>
    <property type="evidence" value="ECO:0007669"/>
    <property type="project" value="Ensembl"/>
</dbReference>
<dbReference type="GO" id="GO:0031267">
    <property type="term" value="F:small GTPase binding"/>
    <property type="evidence" value="ECO:0007669"/>
    <property type="project" value="InterPro"/>
</dbReference>
<dbReference type="GO" id="GO:0043297">
    <property type="term" value="P:apical junction assembly"/>
    <property type="evidence" value="ECO:0000314"/>
    <property type="project" value="UniProtKB"/>
</dbReference>
<dbReference type="GO" id="GO:0006915">
    <property type="term" value="P:apoptotic process"/>
    <property type="evidence" value="ECO:0007669"/>
    <property type="project" value="UniProtKB-KW"/>
</dbReference>
<dbReference type="GO" id="GO:0007155">
    <property type="term" value="P:cell adhesion"/>
    <property type="evidence" value="ECO:0007669"/>
    <property type="project" value="UniProtKB-KW"/>
</dbReference>
<dbReference type="GO" id="GO:0051301">
    <property type="term" value="P:cell division"/>
    <property type="evidence" value="ECO:0007669"/>
    <property type="project" value="UniProtKB-KW"/>
</dbReference>
<dbReference type="GO" id="GO:0030030">
    <property type="term" value="P:cell projection organization"/>
    <property type="evidence" value="ECO:0007669"/>
    <property type="project" value="UniProtKB-KW"/>
</dbReference>
<dbReference type="GO" id="GO:0010631">
    <property type="term" value="P:epithelial cell migration"/>
    <property type="evidence" value="ECO:0000250"/>
    <property type="project" value="UniProtKB"/>
</dbReference>
<dbReference type="GO" id="GO:0032467">
    <property type="term" value="P:positive regulation of cytokinesis"/>
    <property type="evidence" value="ECO:0000250"/>
    <property type="project" value="UniProtKB"/>
</dbReference>
<dbReference type="GO" id="GO:0045931">
    <property type="term" value="P:positive regulation of mitotic cell cycle"/>
    <property type="evidence" value="ECO:0000250"/>
    <property type="project" value="UniProtKB"/>
</dbReference>
<dbReference type="GO" id="GO:0045070">
    <property type="term" value="P:positive regulation of viral genome replication"/>
    <property type="evidence" value="ECO:0007669"/>
    <property type="project" value="Ensembl"/>
</dbReference>
<dbReference type="GO" id="GO:0006468">
    <property type="term" value="P:protein phosphorylation"/>
    <property type="evidence" value="ECO:0000250"/>
    <property type="project" value="UniProtKB"/>
</dbReference>
<dbReference type="GO" id="GO:2000145">
    <property type="term" value="P:regulation of cell motility"/>
    <property type="evidence" value="ECO:0000250"/>
    <property type="project" value="UniProtKB"/>
</dbReference>
<dbReference type="GO" id="GO:0007165">
    <property type="term" value="P:signal transduction"/>
    <property type="evidence" value="ECO:0007669"/>
    <property type="project" value="InterPro"/>
</dbReference>
<dbReference type="CDD" id="cd08687">
    <property type="entry name" value="C2_PKN-like"/>
    <property type="match status" value="1"/>
</dbReference>
<dbReference type="CDD" id="cd11631">
    <property type="entry name" value="HR1_PKN2_2"/>
    <property type="match status" value="1"/>
</dbReference>
<dbReference type="CDD" id="cd11635">
    <property type="entry name" value="HR1_PKN2_3"/>
    <property type="match status" value="1"/>
</dbReference>
<dbReference type="CDD" id="cd11622">
    <property type="entry name" value="HR1_PKN_1"/>
    <property type="match status" value="1"/>
</dbReference>
<dbReference type="CDD" id="cd05589">
    <property type="entry name" value="STKc_PKN"/>
    <property type="match status" value="1"/>
</dbReference>
<dbReference type="FunFam" id="1.10.287.160:FF:000001">
    <property type="entry name" value="Putative serine/threonine-protein kinase N2"/>
    <property type="match status" value="1"/>
</dbReference>
<dbReference type="FunFam" id="1.10.287.160:FF:000002">
    <property type="entry name" value="Putative serine/threonine-protein kinase N2"/>
    <property type="match status" value="1"/>
</dbReference>
<dbReference type="FunFam" id="1.10.287.160:FF:000003">
    <property type="entry name" value="Putative serine/threonine-protein kinase N2"/>
    <property type="match status" value="1"/>
</dbReference>
<dbReference type="FunFam" id="3.30.200.20:FF:000478">
    <property type="entry name" value="Serine/threonine-protein kinase N2"/>
    <property type="match status" value="1"/>
</dbReference>
<dbReference type="FunFam" id="1.10.510.10:FF:000038">
    <property type="entry name" value="serine/threonine-protein kinase N2 isoform X1"/>
    <property type="match status" value="1"/>
</dbReference>
<dbReference type="Gene3D" id="2.60.40.150">
    <property type="entry name" value="C2 domain"/>
    <property type="match status" value="1"/>
</dbReference>
<dbReference type="Gene3D" id="1.10.287.160">
    <property type="entry name" value="HR1 repeat"/>
    <property type="match status" value="3"/>
</dbReference>
<dbReference type="Gene3D" id="3.30.200.20">
    <property type="entry name" value="Phosphorylase Kinase, domain 1"/>
    <property type="match status" value="1"/>
</dbReference>
<dbReference type="Gene3D" id="1.10.510.10">
    <property type="entry name" value="Transferase(Phosphotransferase) domain 1"/>
    <property type="match status" value="1"/>
</dbReference>
<dbReference type="InterPro" id="IPR000961">
    <property type="entry name" value="AGC-kinase_C"/>
</dbReference>
<dbReference type="InterPro" id="IPR000008">
    <property type="entry name" value="C2_dom"/>
</dbReference>
<dbReference type="InterPro" id="IPR035892">
    <property type="entry name" value="C2_domain_sf"/>
</dbReference>
<dbReference type="InterPro" id="IPR037784">
    <property type="entry name" value="C2_PKN"/>
</dbReference>
<dbReference type="InterPro" id="IPR011072">
    <property type="entry name" value="HR1_rho-bd"/>
</dbReference>
<dbReference type="InterPro" id="IPR036274">
    <property type="entry name" value="HR1_rpt_sf"/>
</dbReference>
<dbReference type="InterPro" id="IPR011009">
    <property type="entry name" value="Kinase-like_dom_sf"/>
</dbReference>
<dbReference type="InterPro" id="IPR017892">
    <property type="entry name" value="Pkinase_C"/>
</dbReference>
<dbReference type="InterPro" id="IPR037313">
    <property type="entry name" value="PKN_HR1_1"/>
</dbReference>
<dbReference type="InterPro" id="IPR000719">
    <property type="entry name" value="Prot_kinase_dom"/>
</dbReference>
<dbReference type="InterPro" id="IPR017441">
    <property type="entry name" value="Protein_kinase_ATP_BS"/>
</dbReference>
<dbReference type="InterPro" id="IPR008271">
    <property type="entry name" value="Ser/Thr_kinase_AS"/>
</dbReference>
<dbReference type="PANTHER" id="PTHR24351">
    <property type="entry name" value="RIBOSOMAL PROTEIN S6 KINASE"/>
    <property type="match status" value="1"/>
</dbReference>
<dbReference type="Pfam" id="PF02185">
    <property type="entry name" value="HR1"/>
    <property type="match status" value="3"/>
</dbReference>
<dbReference type="Pfam" id="PF00069">
    <property type="entry name" value="Pkinase"/>
    <property type="match status" value="1"/>
</dbReference>
<dbReference type="Pfam" id="PF00433">
    <property type="entry name" value="Pkinase_C"/>
    <property type="match status" value="1"/>
</dbReference>
<dbReference type="SMART" id="SM00239">
    <property type="entry name" value="C2"/>
    <property type="match status" value="1"/>
</dbReference>
<dbReference type="SMART" id="SM00742">
    <property type="entry name" value="Hr1"/>
    <property type="match status" value="3"/>
</dbReference>
<dbReference type="SMART" id="SM00133">
    <property type="entry name" value="S_TK_X"/>
    <property type="match status" value="1"/>
</dbReference>
<dbReference type="SMART" id="SM00220">
    <property type="entry name" value="S_TKc"/>
    <property type="match status" value="1"/>
</dbReference>
<dbReference type="SUPFAM" id="SSF49562">
    <property type="entry name" value="C2 domain (Calcium/lipid-binding domain, CaLB)"/>
    <property type="match status" value="1"/>
</dbReference>
<dbReference type="SUPFAM" id="SSF46585">
    <property type="entry name" value="HR1 repeat"/>
    <property type="match status" value="3"/>
</dbReference>
<dbReference type="SUPFAM" id="SSF56112">
    <property type="entry name" value="Protein kinase-like (PK-like)"/>
    <property type="match status" value="1"/>
</dbReference>
<dbReference type="PROSITE" id="PS51285">
    <property type="entry name" value="AGC_KINASE_CTER"/>
    <property type="match status" value="1"/>
</dbReference>
<dbReference type="PROSITE" id="PS50004">
    <property type="entry name" value="C2"/>
    <property type="match status" value="1"/>
</dbReference>
<dbReference type="PROSITE" id="PS00107">
    <property type="entry name" value="PROTEIN_KINASE_ATP"/>
    <property type="match status" value="1"/>
</dbReference>
<dbReference type="PROSITE" id="PS50011">
    <property type="entry name" value="PROTEIN_KINASE_DOM"/>
    <property type="match status" value="1"/>
</dbReference>
<dbReference type="PROSITE" id="PS00108">
    <property type="entry name" value="PROTEIN_KINASE_ST"/>
    <property type="match status" value="1"/>
</dbReference>
<dbReference type="PROSITE" id="PS51860">
    <property type="entry name" value="REM_1"/>
    <property type="match status" value="3"/>
</dbReference>
<organism>
    <name type="scientific">Mus musculus</name>
    <name type="common">Mouse</name>
    <dbReference type="NCBI Taxonomy" id="10090"/>
    <lineage>
        <taxon>Eukaryota</taxon>
        <taxon>Metazoa</taxon>
        <taxon>Chordata</taxon>
        <taxon>Craniata</taxon>
        <taxon>Vertebrata</taxon>
        <taxon>Euteleostomi</taxon>
        <taxon>Mammalia</taxon>
        <taxon>Eutheria</taxon>
        <taxon>Euarchontoglires</taxon>
        <taxon>Glires</taxon>
        <taxon>Rodentia</taxon>
        <taxon>Myomorpha</taxon>
        <taxon>Muroidea</taxon>
        <taxon>Muridae</taxon>
        <taxon>Murinae</taxon>
        <taxon>Mus</taxon>
        <taxon>Mus</taxon>
    </lineage>
</organism>
<feature type="chain" id="PRO_0000055723" description="Serine/threonine-protein kinase N2">
    <location>
        <begin position="1"/>
        <end position="983"/>
    </location>
</feature>
<feature type="domain" description="REM-1 1" evidence="6">
    <location>
        <begin position="33"/>
        <end position="109"/>
    </location>
</feature>
<feature type="domain" description="REM-1 2" evidence="6">
    <location>
        <begin position="121"/>
        <end position="203"/>
    </location>
</feature>
<feature type="domain" description="REM-1 3" evidence="6">
    <location>
        <begin position="204"/>
        <end position="284"/>
    </location>
</feature>
<feature type="domain" description="C2" evidence="3">
    <location>
        <begin position="352"/>
        <end position="472"/>
    </location>
</feature>
<feature type="domain" description="Protein kinase" evidence="4">
    <location>
        <begin position="656"/>
        <end position="915"/>
    </location>
</feature>
<feature type="domain" description="AGC-kinase C-terminal" evidence="5">
    <location>
        <begin position="916"/>
        <end position="983"/>
    </location>
</feature>
<feature type="region of interest" description="Disordered" evidence="8">
    <location>
        <begin position="107"/>
        <end position="135"/>
    </location>
</feature>
<feature type="region of interest" description="Disordered" evidence="8">
    <location>
        <begin position="351"/>
        <end position="382"/>
    </location>
</feature>
<feature type="region of interest" description="Necessary to rescue apical junction formation">
    <location>
        <begin position="381"/>
        <end position="462"/>
    </location>
</feature>
<feature type="region of interest" description="Disordered" evidence="8">
    <location>
        <begin position="553"/>
        <end position="588"/>
    </location>
</feature>
<feature type="region of interest" description="Necessary for the catalytic activity" evidence="1">
    <location>
        <begin position="916"/>
        <end position="976"/>
    </location>
</feature>
<feature type="region of interest" description="Negatively regulates the responsiveness of the catalytic activity by cardiolipin and is required for optimal activation by the GTP-bound RhoA" evidence="1">
    <location>
        <begin position="977"/>
        <end position="983"/>
    </location>
</feature>
<feature type="compositionally biased region" description="Low complexity" evidence="8">
    <location>
        <begin position="121"/>
        <end position="135"/>
    </location>
</feature>
<feature type="compositionally biased region" description="Low complexity" evidence="8">
    <location>
        <begin position="364"/>
        <end position="380"/>
    </location>
</feature>
<feature type="active site" description="Proton acceptor" evidence="4 7">
    <location>
        <position position="781"/>
    </location>
</feature>
<feature type="binding site" evidence="4">
    <location>
        <begin position="662"/>
        <end position="670"/>
    </location>
    <ligand>
        <name>ATP</name>
        <dbReference type="ChEBI" id="CHEBI:30616"/>
    </ligand>
</feature>
<feature type="binding site" evidence="4">
    <location>
        <position position="685"/>
    </location>
    <ligand>
        <name>ATP</name>
        <dbReference type="ChEBI" id="CHEBI:30616"/>
    </ligand>
</feature>
<feature type="site" description="Cleavage; by caspase-3" evidence="1">
    <location>
        <begin position="117"/>
        <end position="118"/>
    </location>
</feature>
<feature type="site" description="Cleavage; by caspase-3" evidence="1">
    <location>
        <begin position="699"/>
        <end position="700"/>
    </location>
</feature>
<feature type="modified residue" description="N6-acetyllysine" evidence="19">
    <location>
        <position position="77"/>
    </location>
</feature>
<feature type="modified residue" description="Phosphoserine" evidence="2">
    <location>
        <position position="110"/>
    </location>
</feature>
<feature type="modified residue" description="Phosphothreonine" evidence="2">
    <location>
        <position position="121"/>
    </location>
</feature>
<feature type="modified residue" description="Phosphothreonine" evidence="2">
    <location>
        <position position="124"/>
    </location>
</feature>
<feature type="modified residue" description="Phosphoserine" evidence="2">
    <location>
        <position position="301"/>
    </location>
</feature>
<feature type="modified residue" description="Phosphoserine" evidence="2">
    <location>
        <position position="305"/>
    </location>
</feature>
<feature type="modified residue" description="Phosphoserine" evidence="2">
    <location>
        <position position="359"/>
    </location>
</feature>
<feature type="modified residue" description="Phosphoserine" evidence="2">
    <location>
        <position position="361"/>
    </location>
</feature>
<feature type="modified residue" description="Phosphoserine" evidence="2">
    <location>
        <position position="534"/>
    </location>
</feature>
<feature type="modified residue" description="Phosphoserine" evidence="2">
    <location>
        <position position="582"/>
    </location>
</feature>
<feature type="modified residue" description="Phosphoserine" evidence="18">
    <location>
        <position position="619"/>
    </location>
</feature>
<feature type="modified residue" description="Phosphoserine" evidence="2">
    <location>
        <position position="630"/>
    </location>
</feature>
<feature type="modified residue" description="Phosphothreonine; by PDPK1" evidence="2">
    <location>
        <position position="815"/>
    </location>
</feature>
<feature type="modified residue" description="Phosphoserine" evidence="2">
    <location>
        <position position="951"/>
    </location>
</feature>
<feature type="modified residue" description="Phosphothreonine" evidence="18">
    <location>
        <position position="957"/>
    </location>
</feature>
<feature type="splice variant" id="VSP_012042" description="In isoform 2." evidence="15">
    <location>
        <begin position="35"/>
        <end position="45"/>
    </location>
</feature>
<feature type="splice variant" id="VSP_042185" description="In isoform 3." evidence="16">
    <original>DLKLDNL</original>
    <variation>NTIFSSI</variation>
    <location>
        <begin position="781"/>
        <end position="787"/>
    </location>
</feature>
<feature type="splice variant" id="VSP_042186" description="In isoform 3." evidence="16">
    <location>
        <begin position="788"/>
        <end position="983"/>
    </location>
</feature>
<feature type="mutagenesis site" description="Inhibits interaction with RHOA, reduces localization at junctions and prevents apical junction formation; when associated with K-155." evidence="12">
    <original>A</original>
    <variation>K</variation>
    <location>
        <position position="66"/>
    </location>
</feature>
<feature type="mutagenesis site" description="Inhibits interaction with RHOA, reduces localization at junctions and prevents apical junction formation; when associated with K-60." evidence="12">
    <original>A</original>
    <variation>K</variation>
    <location>
        <position position="155"/>
    </location>
</feature>
<feature type="mutagenesis site" description="Prevents apical junction formation." evidence="12">
    <original>K</original>
    <variation>M</variation>
    <location>
        <position position="685"/>
    </location>
</feature>
<feature type="mutagenesis site" description="Prevents apical junction formation." evidence="12">
    <original>D</original>
    <variation>A</variation>
    <location>
        <position position="781"/>
    </location>
</feature>
<feature type="sequence conflict" description="In Ref. 1; BAC32655." evidence="17" ref="1">
    <original>Q</original>
    <variation>H</variation>
    <location>
        <position position="32"/>
    </location>
</feature>
<feature type="sequence conflict" description="In Ref. 1; BAC33888." evidence="17" ref="1">
    <original>N</original>
    <variation>H</variation>
    <location>
        <position position="84"/>
    </location>
</feature>
<feature type="sequence conflict" description="In Ref. 1; BAC38910." evidence="17" ref="1">
    <original>V</original>
    <variation>D</variation>
    <location>
        <position position="395"/>
    </location>
</feature>
<feature type="sequence conflict" description="In Ref. 1; BAC32655." evidence="17" ref="1">
    <original>L</original>
    <variation>F</variation>
    <location>
        <position position="569"/>
    </location>
</feature>
<feature type="sequence conflict" description="In Ref. 1; BAC33888." evidence="17" ref="1">
    <original>E</original>
    <variation>K</variation>
    <location>
        <position position="704"/>
    </location>
</feature>
<name>PKN2_MOUSE</name>
<proteinExistence type="evidence at protein level"/>
<comment type="function">
    <text evidence="2 11 12 13">PKC-related serine/threonine-protein kinase and Rho/Rac effector protein that participates in specific signal transduction responses in the cell. Plays a role in the regulation of cell cycle progression, actin cytoskeleton assembly, cell migration, cell adhesion, tumor cell invasion and transcription activation signaling processes. Phosphorylates CTTN in hyaluronan-induced astrocytes and hence decreases CTTN ability to associate with filamentous actin. Phosphorylates HDAC5, therefore lead to impair HDAC5 import. Direct RhoA target required for the regulation of the maturation of primordial junctions into apical junction formation in bronchial epithelial cells. Required for G2/M phases of the cell cycle progression and abscission during cytokinesis in a ECT2-dependent manner. Stimulates FYN kinase activity that is required for establishment of skin cell-cell adhesion during keratinocytes differentiation. Regulates epithelial bladder cells speed and direction of movement during cell migration and tumor cell invasion. Inhibits Akt pro-survival-induced kinase activity. Mediates Rho protein-induced transcriptional activation via the c-fos serum response factor (SRF). Involved in the negative regulation of ciliogenesis (By similarity).</text>
</comment>
<comment type="catalytic activity">
    <reaction>
        <text>L-seryl-[protein] + ATP = O-phospho-L-seryl-[protein] + ADP + H(+)</text>
        <dbReference type="Rhea" id="RHEA:17989"/>
        <dbReference type="Rhea" id="RHEA-COMP:9863"/>
        <dbReference type="Rhea" id="RHEA-COMP:11604"/>
        <dbReference type="ChEBI" id="CHEBI:15378"/>
        <dbReference type="ChEBI" id="CHEBI:29999"/>
        <dbReference type="ChEBI" id="CHEBI:30616"/>
        <dbReference type="ChEBI" id="CHEBI:83421"/>
        <dbReference type="ChEBI" id="CHEBI:456216"/>
        <dbReference type="EC" id="2.7.11.13"/>
    </reaction>
</comment>
<comment type="catalytic activity">
    <reaction>
        <text>L-threonyl-[protein] + ATP = O-phospho-L-threonyl-[protein] + ADP + H(+)</text>
        <dbReference type="Rhea" id="RHEA:46608"/>
        <dbReference type="Rhea" id="RHEA-COMP:11060"/>
        <dbReference type="Rhea" id="RHEA-COMP:11605"/>
        <dbReference type="ChEBI" id="CHEBI:15378"/>
        <dbReference type="ChEBI" id="CHEBI:30013"/>
        <dbReference type="ChEBI" id="CHEBI:30616"/>
        <dbReference type="ChEBI" id="CHEBI:61977"/>
        <dbReference type="ChEBI" id="CHEBI:456216"/>
        <dbReference type="EC" id="2.7.11.13"/>
    </reaction>
</comment>
<comment type="activity regulation">
    <text evidence="1">Kinase activity is activated upon binding to GTP-bound Rho1/Rac1 GTPases. Activated by caspase-3 (CASP3) cleavage during apoptosis. Activated by lipids, particularly cardiolipin and to a lesser extent by other acidic phospholipids and unsaturated fatty acids. Two specific sites, Thr-815 (activation loop of the kinase domain) and Thr-957 (turn motif), need to be phosphorylated for its full activation (By similarity).</text>
</comment>
<comment type="subunit">
    <text evidence="2 9 11 12 13">Interacts (via the REM repeats) with RHOA (GTP-bound form preferentially) and interacts (via the REM repeats) with RAC1 (GTP-bound form preferentially); the interactions induce its autophosphorylation (PubMed:17403031, PubMed:20974804). Interacts with NCK1 (via SH3 domains) (PubMed:8910519). Interacts with RHOC. Interacts with NCK1 and NCK2 (By similarity). Interacts with CD44 (PubMed:17403031). Interacts (via C-terminal kinase domain) with PDPK1; the interaction stimulates PDPK1 kinase activity (By similarity). Interacts with MAP3K2; the interaction activates PRK2 kinase activity in a MAP3K2-independent kinase activity (PubMed:10818102). Interacts (via C-terminal domain) with AKT1; the interaction occurs with the C-terminal cleavage product of PRK2 in apoptotic cells. Interacts (via C-terminus) with PTPN13 (via PDZ 3 domain). Interacts with CDK10 (By similarity).</text>
</comment>
<comment type="subcellular location">
    <subcellularLocation>
        <location evidence="14">Cytoplasm</location>
    </subcellularLocation>
    <subcellularLocation>
        <location evidence="2">Nucleus</location>
    </subcellularLocation>
    <subcellularLocation>
        <location evidence="14">Membrane</location>
    </subcellularLocation>
    <subcellularLocation>
        <location evidence="2">Cell projection</location>
        <location evidence="2">Lamellipodium</location>
    </subcellularLocation>
    <subcellularLocation>
        <location evidence="2">Cytoplasm</location>
        <location evidence="2">Cytoskeleton</location>
    </subcellularLocation>
    <subcellularLocation>
        <location evidence="2">Cleavage furrow</location>
    </subcellularLocation>
    <subcellularLocation>
        <location evidence="2">Midbody</location>
    </subcellularLocation>
    <subcellularLocation>
        <location evidence="2">Cell junction</location>
    </subcellularLocation>
    <text evidence="2">Colocalizes with PTPN13 in lamellipodia-like structures, regions of large actin turnover. Accumulates during telophase at the cleavage furrow and concentrates finally around the midbody in cytokinesis. Recruited to nascent cell-cell contacts at the apical surface of cells.</text>
</comment>
<comment type="alternative products">
    <event type="alternative splicing"/>
    <isoform>
        <id>Q8BWW9-1</id>
        <name>1</name>
        <sequence type="displayed"/>
    </isoform>
    <isoform>
        <id>Q8BWW9-2</id>
        <name>2</name>
        <sequence type="described" ref="VSP_012042"/>
    </isoform>
    <isoform>
        <id>Q8BWW9-3</id>
        <name>3</name>
        <sequence type="described" ref="VSP_042185 VSP_042186"/>
    </isoform>
</comment>
<comment type="tissue specificity">
    <text evidence="10 11 13 14">Ubiquitous. Highly expressed in liver and lung Expressed in astrocytes (at protein level). Ubiquitous.</text>
</comment>
<comment type="domain">
    <text evidence="1">The N-terminal regioninterferes with the interaction between AKT1 and the C-terminal regionof PKN2.</text>
</comment>
<comment type="domain">
    <text>The C1 domain does not bind the diacylglycerol (DAG).</text>
</comment>
<comment type="domain">
    <text evidence="1">The apoptotic C-terminal cleavage product inhibits EGF-induced kinase activity of AKT1 phosphorylation at 'Thr-308' and 'Ser-473' sites, PDPK1 autophosphorylation and kinases PRKCD and PRKCZ phosphorylations.</text>
</comment>
<comment type="PTM">
    <text evidence="1 2">Phosphorylated during mitosis (By similarity). Autophosphorylated. Phosphorylated. Phosphorylated by CDK10 (By similarity).</text>
</comment>
<comment type="PTM">
    <text evidence="1">Activated by limited proteolysis with trypsin. Proteolytically cleaved by caspase-3 during the induction of apoptotic cell death.</text>
</comment>
<comment type="similarity">
    <text evidence="17">Belongs to the protein kinase superfamily. AGC Ser/Thr protein kinase family. PKC subfamily.</text>
</comment>
<gene>
    <name type="primary">Pkn2</name>
    <name type="synonym">Prk2</name>
    <name type="synonym">Prkcl2</name>
</gene>
<keyword id="KW-0007">Acetylation</keyword>
<keyword id="KW-0025">Alternative splicing</keyword>
<keyword id="KW-0053">Apoptosis</keyword>
<keyword id="KW-0067">ATP-binding</keyword>
<keyword id="KW-0130">Cell adhesion</keyword>
<keyword id="KW-0131">Cell cycle</keyword>
<keyword id="KW-0132">Cell division</keyword>
<keyword id="KW-0965">Cell junction</keyword>
<keyword id="KW-0966">Cell projection</keyword>
<keyword id="KW-0970">Cilium biogenesis/degradation</keyword>
<keyword id="KW-0175">Coiled coil</keyword>
<keyword id="KW-0963">Cytoplasm</keyword>
<keyword id="KW-0206">Cytoskeleton</keyword>
<keyword id="KW-0418">Kinase</keyword>
<keyword id="KW-0472">Membrane</keyword>
<keyword id="KW-0547">Nucleotide-binding</keyword>
<keyword id="KW-0539">Nucleus</keyword>
<keyword id="KW-0597">Phosphoprotein</keyword>
<keyword id="KW-1185">Reference proteome</keyword>
<keyword id="KW-0677">Repeat</keyword>
<keyword id="KW-0723">Serine/threonine-protein kinase</keyword>
<keyword id="KW-0804">Transcription</keyword>
<keyword id="KW-0805">Transcription regulation</keyword>
<keyword id="KW-0808">Transferase</keyword>
<evidence type="ECO:0000250" key="1"/>
<evidence type="ECO:0000250" key="2">
    <source>
        <dbReference type="UniProtKB" id="Q16513"/>
    </source>
</evidence>
<evidence type="ECO:0000255" key="3">
    <source>
        <dbReference type="PROSITE-ProRule" id="PRU00041"/>
    </source>
</evidence>
<evidence type="ECO:0000255" key="4">
    <source>
        <dbReference type="PROSITE-ProRule" id="PRU00159"/>
    </source>
</evidence>
<evidence type="ECO:0000255" key="5">
    <source>
        <dbReference type="PROSITE-ProRule" id="PRU00618"/>
    </source>
</evidence>
<evidence type="ECO:0000255" key="6">
    <source>
        <dbReference type="PROSITE-ProRule" id="PRU01207"/>
    </source>
</evidence>
<evidence type="ECO:0000255" key="7">
    <source>
        <dbReference type="PROSITE-ProRule" id="PRU10027"/>
    </source>
</evidence>
<evidence type="ECO:0000256" key="8">
    <source>
        <dbReference type="SAM" id="MobiDB-lite"/>
    </source>
</evidence>
<evidence type="ECO:0000269" key="9">
    <source>
    </source>
</evidence>
<evidence type="ECO:0000269" key="10">
    <source>
    </source>
</evidence>
<evidence type="ECO:0000269" key="11">
    <source>
    </source>
</evidence>
<evidence type="ECO:0000269" key="12">
    <source>
    </source>
</evidence>
<evidence type="ECO:0000269" key="13">
    <source>
    </source>
</evidence>
<evidence type="ECO:0000269" key="14">
    <source>
    </source>
</evidence>
<evidence type="ECO:0000303" key="15">
    <source>
    </source>
</evidence>
<evidence type="ECO:0000303" key="16">
    <source>
    </source>
</evidence>
<evidence type="ECO:0000305" key="17"/>
<evidence type="ECO:0007744" key="18">
    <source>
    </source>
</evidence>
<evidence type="ECO:0007744" key="19">
    <source>
    </source>
</evidence>
<sequence>MASNPDRGEILLTELQGDSRTLPFSENVSAVQKLDFSDTMVQQKLDDIKDRIKREIRKELKIKEGAENLRKVTTDKKNLAYVDNILKKSNKKLEELHHKLQELNAHIVVSDPEDSTDCPRTPDTPNSDSRSSTSNNRLMALQKQLDIELKVKQGAENMIQMYSNGSSKDRKLHGTAQQLLQDSKTKIEVIRMQILQAVQTNELAFDNAKPVISPLELRMEELRHHFKIEFAVAEGAKNVMKLLGSGKVTDRKALSEAQARFNESSQKLDLLKYSLEQRLNELPRNHPKSSVVIEELSLVASPTLSPRQSMLSTQNQYSTLSKPAALTGTLEVRLMGCQDILENVPGRSKATSVALPGWSPSDNRSSFMSRTSKSKSGSSRNLLKTDDLSNDVCAVLKLDNTVVGQTSWKPISNQSWDQKFTLELDRSRELEISVYWRDWRSLCAVKFLRLEDFLDNQRHGMCLYLEPQGTLFAEVTFFNPVIERRPKLQRQKKIFSKQQGKTFLRAPQMNINIATWGRLVRRAIPTVNHSGTFSPQTPVPATVPVVDARIPDLAPPASDSTVTKLDFDLEPEPPPAPPRASSLGETDESSELRVLDIPGQGSETVFNIENDRNNLRPKSKSEYELSIPDSGRSCWGVGELDDKRAQQRFQFSLQDFRCCAVLGRGHFGKVLLAEYKHTNEMFAIKALKKGDIVARDEVDSLMCEKRIFETVNSVRHPFLVNLFACFQTKEHVCFVMEYAAGGDLMMHIHTDVFSEPRAVFYAACVVLGLQYLHEHKIVYRDLKLDNLLLDTEGFVKIADFGLCKEGMGYGDRTSTFCGTPEFLAPEVLTETSYTRAVDWWGLGVLIYEMLVGESPFPGDDEEEVFDSIVNDEVRYPRFLSTEAISIMRRLLRRNPERRLGAGEKDAEDVKKHPFFRLTDWSALMDKKVKPPFVPTIRGREDVSNFDDEFTSEAPILTPPREPRILLEEEQEMFHDFDYVADWC</sequence>